<evidence type="ECO:0000250" key="1">
    <source>
        <dbReference type="UniProtKB" id="P03891"/>
    </source>
</evidence>
<evidence type="ECO:0000250" key="2">
    <source>
        <dbReference type="UniProtKB" id="P03892"/>
    </source>
</evidence>
<evidence type="ECO:0000255" key="3"/>
<evidence type="ECO:0000305" key="4"/>
<proteinExistence type="inferred from homology"/>
<geneLocation type="mitochondrion"/>
<gene>
    <name evidence="1" type="primary">MT-ND2</name>
    <name type="synonym">MTND2</name>
    <name type="synonym">NADH2</name>
    <name type="synonym">ND2</name>
</gene>
<organism>
    <name type="scientific">Peropteryx kappleri</name>
    <name type="common">Greater dog-like bat</name>
    <dbReference type="NCBI Taxonomy" id="249014"/>
    <lineage>
        <taxon>Eukaryota</taxon>
        <taxon>Metazoa</taxon>
        <taxon>Chordata</taxon>
        <taxon>Craniata</taxon>
        <taxon>Vertebrata</taxon>
        <taxon>Euteleostomi</taxon>
        <taxon>Mammalia</taxon>
        <taxon>Eutheria</taxon>
        <taxon>Laurasiatheria</taxon>
        <taxon>Chiroptera</taxon>
        <taxon>Yangochiroptera</taxon>
        <taxon>Emballonuridae</taxon>
        <taxon>Emballonurinae</taxon>
        <taxon>Peropteryx</taxon>
    </lineage>
</organism>
<sequence length="347" mass="38971">MNPLILLLITLTVILGTLIVMMSSHWLMIWMGFEMNMLAVIPLLMKQYNPRSMEAATKYFLTQATASMLLMLAIIINLMYSGQWTFTKFMDPTASIIMTLALMMKLGLAPFHFWVPEVTQGISLTSGLILLTWQKLAPLSILYTITPVINPDLLLMASMLSIAIGGWGGLNQTQLRKILAYSSIAHMGWMMSVLAFNPTMTLLNLFMYILMTSTTFMLFMVASTTTTLSLSLTWNKTPLITTSILIMMLSLGGLPPLAGFLPKWMIIQELTKSNNIILATLMAITALLNLFFYIRLTYATSLTMFPTTNNMKIKWQFKTTKQMNYLPPLIIMSTLTLPLAPAMILLN</sequence>
<accession>Q330H2</accession>
<dbReference type="EC" id="7.1.1.2" evidence="1"/>
<dbReference type="EMBL" id="AY504520">
    <property type="protein sequence ID" value="AAS91385.1"/>
    <property type="molecule type" value="Genomic_DNA"/>
</dbReference>
<dbReference type="SMR" id="Q330H2"/>
<dbReference type="GO" id="GO:0005743">
    <property type="term" value="C:mitochondrial inner membrane"/>
    <property type="evidence" value="ECO:0000250"/>
    <property type="project" value="UniProtKB"/>
</dbReference>
<dbReference type="GO" id="GO:0008137">
    <property type="term" value="F:NADH dehydrogenase (ubiquinone) activity"/>
    <property type="evidence" value="ECO:0007669"/>
    <property type="project" value="UniProtKB-EC"/>
</dbReference>
<dbReference type="GO" id="GO:0006120">
    <property type="term" value="P:mitochondrial electron transport, NADH to ubiquinone"/>
    <property type="evidence" value="ECO:0007669"/>
    <property type="project" value="InterPro"/>
</dbReference>
<dbReference type="InterPro" id="IPR050175">
    <property type="entry name" value="Complex_I_Subunit_2"/>
</dbReference>
<dbReference type="InterPro" id="IPR010933">
    <property type="entry name" value="NADH_DH_su2_C"/>
</dbReference>
<dbReference type="InterPro" id="IPR003917">
    <property type="entry name" value="NADH_UbQ_OxRdtase_chain2"/>
</dbReference>
<dbReference type="InterPro" id="IPR001750">
    <property type="entry name" value="ND/Mrp_TM"/>
</dbReference>
<dbReference type="PANTHER" id="PTHR46552">
    <property type="entry name" value="NADH-UBIQUINONE OXIDOREDUCTASE CHAIN 2"/>
    <property type="match status" value="1"/>
</dbReference>
<dbReference type="PANTHER" id="PTHR46552:SF1">
    <property type="entry name" value="NADH-UBIQUINONE OXIDOREDUCTASE CHAIN 2"/>
    <property type="match status" value="1"/>
</dbReference>
<dbReference type="Pfam" id="PF06444">
    <property type="entry name" value="NADH_dehy_S2_C"/>
    <property type="match status" value="1"/>
</dbReference>
<dbReference type="Pfam" id="PF00361">
    <property type="entry name" value="Proton_antipo_M"/>
    <property type="match status" value="1"/>
</dbReference>
<dbReference type="PRINTS" id="PR01436">
    <property type="entry name" value="NADHDHGNASE2"/>
</dbReference>
<reference key="1">
    <citation type="submission" date="2003-12" db="EMBL/GenBank/DDBJ databases">
        <title>Bats and birds: flying in the face of mtDNA evolutionary rates.</title>
        <authorList>
            <person name="Worthington Wilmer J.M."/>
            <person name="Schneider C.J."/>
            <person name="Sorenson M.D."/>
        </authorList>
    </citation>
    <scope>NUCLEOTIDE SEQUENCE [GENOMIC DNA]</scope>
    <source>
        <strain>Isolate CR1</strain>
    </source>
</reference>
<protein>
    <recommendedName>
        <fullName evidence="1">NADH-ubiquinone oxidoreductase chain 2</fullName>
        <ecNumber evidence="1">7.1.1.2</ecNumber>
    </recommendedName>
    <alternativeName>
        <fullName>NADH dehydrogenase subunit 2</fullName>
    </alternativeName>
</protein>
<feature type="chain" id="PRO_0000256675" description="NADH-ubiquinone oxidoreductase chain 2">
    <location>
        <begin position="1"/>
        <end position="347"/>
    </location>
</feature>
<feature type="transmembrane region" description="Helical" evidence="3">
    <location>
        <begin position="3"/>
        <end position="23"/>
    </location>
</feature>
<feature type="transmembrane region" description="Helical" evidence="3">
    <location>
        <begin position="25"/>
        <end position="45"/>
    </location>
</feature>
<feature type="transmembrane region" description="Helical" evidence="3">
    <location>
        <begin position="59"/>
        <end position="79"/>
    </location>
</feature>
<feature type="transmembrane region" description="Helical" evidence="3">
    <location>
        <begin position="96"/>
        <end position="116"/>
    </location>
</feature>
<feature type="transmembrane region" description="Helical" evidence="3">
    <location>
        <begin position="122"/>
        <end position="142"/>
    </location>
</feature>
<feature type="transmembrane region" description="Helical" evidence="3">
    <location>
        <begin position="148"/>
        <end position="168"/>
    </location>
</feature>
<feature type="transmembrane region" description="Helical" evidence="3">
    <location>
        <begin position="178"/>
        <end position="198"/>
    </location>
</feature>
<feature type="transmembrane region" description="Helical" evidence="3">
    <location>
        <begin position="202"/>
        <end position="222"/>
    </location>
</feature>
<feature type="transmembrane region" description="Helical" evidence="3">
    <location>
        <begin position="240"/>
        <end position="260"/>
    </location>
</feature>
<feature type="transmembrane region" description="Helical" evidence="3">
    <location>
        <begin position="276"/>
        <end position="296"/>
    </location>
</feature>
<feature type="transmembrane region" description="Helical" evidence="3">
    <location>
        <begin position="326"/>
        <end position="346"/>
    </location>
</feature>
<keyword id="KW-0249">Electron transport</keyword>
<keyword id="KW-0472">Membrane</keyword>
<keyword id="KW-0496">Mitochondrion</keyword>
<keyword id="KW-0999">Mitochondrion inner membrane</keyword>
<keyword id="KW-0520">NAD</keyword>
<keyword id="KW-0679">Respiratory chain</keyword>
<keyword id="KW-1278">Translocase</keyword>
<keyword id="KW-0812">Transmembrane</keyword>
<keyword id="KW-1133">Transmembrane helix</keyword>
<keyword id="KW-0813">Transport</keyword>
<keyword id="KW-0830">Ubiquinone</keyword>
<comment type="function">
    <text evidence="1">Core subunit of the mitochondrial membrane respiratory chain NADH dehydrogenase (Complex I) which catalyzes electron transfer from NADH through the respiratory chain, using ubiquinone as an electron acceptor. Essential for the catalytic activity and assembly of complex I.</text>
</comment>
<comment type="catalytic activity">
    <reaction evidence="1">
        <text>a ubiquinone + NADH + 5 H(+)(in) = a ubiquinol + NAD(+) + 4 H(+)(out)</text>
        <dbReference type="Rhea" id="RHEA:29091"/>
        <dbReference type="Rhea" id="RHEA-COMP:9565"/>
        <dbReference type="Rhea" id="RHEA-COMP:9566"/>
        <dbReference type="ChEBI" id="CHEBI:15378"/>
        <dbReference type="ChEBI" id="CHEBI:16389"/>
        <dbReference type="ChEBI" id="CHEBI:17976"/>
        <dbReference type="ChEBI" id="CHEBI:57540"/>
        <dbReference type="ChEBI" id="CHEBI:57945"/>
        <dbReference type="EC" id="7.1.1.2"/>
    </reaction>
</comment>
<comment type="subunit">
    <text evidence="1 2">Core subunit of respiratory chain NADH dehydrogenase (Complex I) which is composed of 45 different subunits. Interacts with TMEM242 (By similarity).</text>
</comment>
<comment type="subcellular location">
    <subcellularLocation>
        <location evidence="2">Mitochondrion inner membrane</location>
        <topology evidence="3">Multi-pass membrane protein</topology>
    </subcellularLocation>
</comment>
<comment type="similarity">
    <text evidence="4">Belongs to the complex I subunit 2 family.</text>
</comment>
<name>NU2M_PERKA</name>